<gene>
    <name evidence="1" type="primary">purQ</name>
    <name type="ordered locus">BAA_0348</name>
</gene>
<name>PURQ_BACAA</name>
<reference key="1">
    <citation type="submission" date="2009-04" db="EMBL/GenBank/DDBJ databases">
        <title>Genome sequence of Bacillus anthracis A0248.</title>
        <authorList>
            <person name="Dodson R.J."/>
            <person name="Munk A.C."/>
            <person name="Bruce D."/>
            <person name="Detter C."/>
            <person name="Tapia R."/>
            <person name="Sutton G."/>
            <person name="Sims D."/>
            <person name="Brettin T."/>
        </authorList>
    </citation>
    <scope>NUCLEOTIDE SEQUENCE [LARGE SCALE GENOMIC DNA]</scope>
    <source>
        <strain>A0248</strain>
    </source>
</reference>
<comment type="function">
    <text evidence="1">Part of the phosphoribosylformylglycinamidine synthase complex involved in the purines biosynthetic pathway. Catalyzes the ATP-dependent conversion of formylglycinamide ribonucleotide (FGAR) and glutamine to yield formylglycinamidine ribonucleotide (FGAM) and glutamate. The FGAM synthase complex is composed of three subunits. PurQ produces an ammonia molecule by converting glutamine to glutamate. PurL transfers the ammonia molecule to FGAR to form FGAM in an ATP-dependent manner. PurS interacts with PurQ and PurL and is thought to assist in the transfer of the ammonia molecule from PurQ to PurL.</text>
</comment>
<comment type="catalytic activity">
    <reaction evidence="1">
        <text>N(2)-formyl-N(1)-(5-phospho-beta-D-ribosyl)glycinamide + L-glutamine + ATP + H2O = 2-formamido-N(1)-(5-O-phospho-beta-D-ribosyl)acetamidine + L-glutamate + ADP + phosphate + H(+)</text>
        <dbReference type="Rhea" id="RHEA:17129"/>
        <dbReference type="ChEBI" id="CHEBI:15377"/>
        <dbReference type="ChEBI" id="CHEBI:15378"/>
        <dbReference type="ChEBI" id="CHEBI:29985"/>
        <dbReference type="ChEBI" id="CHEBI:30616"/>
        <dbReference type="ChEBI" id="CHEBI:43474"/>
        <dbReference type="ChEBI" id="CHEBI:58359"/>
        <dbReference type="ChEBI" id="CHEBI:147286"/>
        <dbReference type="ChEBI" id="CHEBI:147287"/>
        <dbReference type="ChEBI" id="CHEBI:456216"/>
        <dbReference type="EC" id="6.3.5.3"/>
    </reaction>
</comment>
<comment type="catalytic activity">
    <reaction evidence="1">
        <text>L-glutamine + H2O = L-glutamate + NH4(+)</text>
        <dbReference type="Rhea" id="RHEA:15889"/>
        <dbReference type="ChEBI" id="CHEBI:15377"/>
        <dbReference type="ChEBI" id="CHEBI:28938"/>
        <dbReference type="ChEBI" id="CHEBI:29985"/>
        <dbReference type="ChEBI" id="CHEBI:58359"/>
        <dbReference type="EC" id="3.5.1.2"/>
    </reaction>
</comment>
<comment type="pathway">
    <text evidence="1">Purine metabolism; IMP biosynthesis via de novo pathway; 5-amino-1-(5-phospho-D-ribosyl)imidazole from N(2)-formyl-N(1)-(5-phospho-D-ribosyl)glycinamide: step 1/2.</text>
</comment>
<comment type="subunit">
    <text evidence="1">Part of the FGAM synthase complex composed of 1 PurL, 1 PurQ and 2 PurS subunits.</text>
</comment>
<comment type="subcellular location">
    <subcellularLocation>
        <location evidence="1">Cytoplasm</location>
    </subcellularLocation>
</comment>
<dbReference type="EC" id="6.3.5.3" evidence="1"/>
<dbReference type="EC" id="3.5.1.2" evidence="1"/>
<dbReference type="EMBL" id="CP001598">
    <property type="protein sequence ID" value="ACQ46198.1"/>
    <property type="molecule type" value="Genomic_DNA"/>
</dbReference>
<dbReference type="RefSeq" id="WP_000666779.1">
    <property type="nucleotide sequence ID" value="NC_012659.1"/>
</dbReference>
<dbReference type="SMR" id="C3PBM9"/>
<dbReference type="GeneID" id="69534103"/>
<dbReference type="KEGG" id="bai:BAA_0348"/>
<dbReference type="HOGENOM" id="CLU_001031_3_1_9"/>
<dbReference type="UniPathway" id="UPA00074">
    <property type="reaction ID" value="UER00128"/>
</dbReference>
<dbReference type="GO" id="GO:0005737">
    <property type="term" value="C:cytoplasm"/>
    <property type="evidence" value="ECO:0007669"/>
    <property type="project" value="UniProtKB-SubCell"/>
</dbReference>
<dbReference type="GO" id="GO:0005524">
    <property type="term" value="F:ATP binding"/>
    <property type="evidence" value="ECO:0007669"/>
    <property type="project" value="UniProtKB-KW"/>
</dbReference>
<dbReference type="GO" id="GO:0004359">
    <property type="term" value="F:glutaminase activity"/>
    <property type="evidence" value="ECO:0007669"/>
    <property type="project" value="UniProtKB-EC"/>
</dbReference>
<dbReference type="GO" id="GO:0004642">
    <property type="term" value="F:phosphoribosylformylglycinamidine synthase activity"/>
    <property type="evidence" value="ECO:0007669"/>
    <property type="project" value="UniProtKB-UniRule"/>
</dbReference>
<dbReference type="GO" id="GO:0006189">
    <property type="term" value="P:'de novo' IMP biosynthetic process"/>
    <property type="evidence" value="ECO:0007669"/>
    <property type="project" value="UniProtKB-UniRule"/>
</dbReference>
<dbReference type="CDD" id="cd01740">
    <property type="entry name" value="GATase1_FGAR_AT"/>
    <property type="match status" value="1"/>
</dbReference>
<dbReference type="FunFam" id="3.40.50.880:FF:000019">
    <property type="entry name" value="Phosphoribosylformylglycinamidine synthase subunit PurQ"/>
    <property type="match status" value="1"/>
</dbReference>
<dbReference type="Gene3D" id="3.40.50.880">
    <property type="match status" value="1"/>
</dbReference>
<dbReference type="HAMAP" id="MF_00421">
    <property type="entry name" value="PurQ"/>
    <property type="match status" value="1"/>
</dbReference>
<dbReference type="InterPro" id="IPR029062">
    <property type="entry name" value="Class_I_gatase-like"/>
</dbReference>
<dbReference type="InterPro" id="IPR010075">
    <property type="entry name" value="PRibForGlyAmidine_synth_PurQ"/>
</dbReference>
<dbReference type="NCBIfam" id="TIGR01737">
    <property type="entry name" value="FGAM_synth_I"/>
    <property type="match status" value="1"/>
</dbReference>
<dbReference type="NCBIfam" id="NF002957">
    <property type="entry name" value="PRK03619.1"/>
    <property type="match status" value="1"/>
</dbReference>
<dbReference type="PANTHER" id="PTHR47552">
    <property type="entry name" value="PHOSPHORIBOSYLFORMYLGLYCINAMIDINE SYNTHASE SUBUNIT PURQ"/>
    <property type="match status" value="1"/>
</dbReference>
<dbReference type="PANTHER" id="PTHR47552:SF1">
    <property type="entry name" value="PHOSPHORIBOSYLFORMYLGLYCINAMIDINE SYNTHASE SUBUNIT PURQ"/>
    <property type="match status" value="1"/>
</dbReference>
<dbReference type="Pfam" id="PF13507">
    <property type="entry name" value="GATase_5"/>
    <property type="match status" value="1"/>
</dbReference>
<dbReference type="PIRSF" id="PIRSF001586">
    <property type="entry name" value="FGAM_synth_I"/>
    <property type="match status" value="1"/>
</dbReference>
<dbReference type="SMART" id="SM01211">
    <property type="entry name" value="GATase_5"/>
    <property type="match status" value="1"/>
</dbReference>
<dbReference type="SUPFAM" id="SSF52317">
    <property type="entry name" value="Class I glutamine amidotransferase-like"/>
    <property type="match status" value="1"/>
</dbReference>
<dbReference type="PROSITE" id="PS51273">
    <property type="entry name" value="GATASE_TYPE_1"/>
    <property type="match status" value="1"/>
</dbReference>
<keyword id="KW-0067">ATP-binding</keyword>
<keyword id="KW-0963">Cytoplasm</keyword>
<keyword id="KW-0315">Glutamine amidotransferase</keyword>
<keyword id="KW-0378">Hydrolase</keyword>
<keyword id="KW-0436">Ligase</keyword>
<keyword id="KW-0547">Nucleotide-binding</keyword>
<keyword id="KW-0658">Purine biosynthesis</keyword>
<sequence>MKFAVIVFPGSNCDVDMFHAIKDELGEEVDYVWHDTENLDEYDAILLPGGFSYGDYLRCGAISRFANAMKAVQKAAEQGKPILGVCNGFQILVESGLLPGALMRNENLKFMCRTVQLRVENNETMFTSQYEKDEVINIPIAHGEGNYYCDEETLKQLEENNQIAFRYVENPNGSVSDIAGIVNEKGNVLGMMPHPERAVDELLGGAEGLKVFQSILKQWRETYVVNA</sequence>
<proteinExistence type="inferred from homology"/>
<feature type="chain" id="PRO_1000134910" description="Phosphoribosylformylglycinamidine synthase subunit PurQ">
    <location>
        <begin position="1"/>
        <end position="227"/>
    </location>
</feature>
<feature type="domain" description="Glutamine amidotransferase type-1" evidence="1">
    <location>
        <begin position="3"/>
        <end position="225"/>
    </location>
</feature>
<feature type="active site" description="Nucleophile" evidence="1">
    <location>
        <position position="86"/>
    </location>
</feature>
<feature type="active site" evidence="1">
    <location>
        <position position="194"/>
    </location>
</feature>
<feature type="active site" evidence="1">
    <location>
        <position position="196"/>
    </location>
</feature>
<evidence type="ECO:0000255" key="1">
    <source>
        <dbReference type="HAMAP-Rule" id="MF_00421"/>
    </source>
</evidence>
<protein>
    <recommendedName>
        <fullName evidence="1">Phosphoribosylformylglycinamidine synthase subunit PurQ</fullName>
        <shortName evidence="1">FGAM synthase</shortName>
        <ecNumber evidence="1">6.3.5.3</ecNumber>
    </recommendedName>
    <alternativeName>
        <fullName evidence="1">Formylglycinamide ribonucleotide amidotransferase subunit I</fullName>
        <shortName evidence="1">FGAR amidotransferase I</shortName>
        <shortName evidence="1">FGAR-AT I</shortName>
    </alternativeName>
    <alternativeName>
        <fullName evidence="1">Glutaminase PurQ</fullName>
        <ecNumber evidence="1">3.5.1.2</ecNumber>
    </alternativeName>
    <alternativeName>
        <fullName evidence="1">Phosphoribosylformylglycinamidine synthase subunit I</fullName>
    </alternativeName>
</protein>
<accession>C3PBM9</accession>
<organism>
    <name type="scientific">Bacillus anthracis (strain A0248)</name>
    <dbReference type="NCBI Taxonomy" id="592021"/>
    <lineage>
        <taxon>Bacteria</taxon>
        <taxon>Bacillati</taxon>
        <taxon>Bacillota</taxon>
        <taxon>Bacilli</taxon>
        <taxon>Bacillales</taxon>
        <taxon>Bacillaceae</taxon>
        <taxon>Bacillus</taxon>
        <taxon>Bacillus cereus group</taxon>
    </lineage>
</organism>